<sequence>MNTPPFVCWIFCKVIDNFGDIGVSLRLARVLHRELGWQVHLWTDDVSALRALCPDLPDVPCVHQDIHVRTWHSDAADIDTAPVPDAVIETFACDLPENVLHIIRRHKPLWLNWEYLSAEESNERLHLMPSPQEGVQKYFWFMGFSEKSGGLIRERDYRDAVRFDTEALRQRLMLPEKNAPEWLLFGYRSDVWAKWLEMWQQAGSPMTLLLAGAQIIDSLKQSGIIPQNALQNDGDVFQTASVRLVKIPFVPQQDFDQLLHLADCAVIRGEDSFVRAQLAGKPFFWHIYPQDEHVHLDKLHAFWDKAHGFYTPETASAHRCLSDDLNGGEALSATQRLECWQILQQHQNGWRQGAGAWSRYLFGQPSASEKLAAFVSKHQKIR</sequence>
<protein>
    <recommendedName>
        <fullName evidence="4">Protein-arginine rhamnosyltransferase</fullName>
        <ecNumber evidence="5">2.4.1.-</ecNumber>
    </recommendedName>
    <alternativeName>
        <fullName evidence="3">EF-P arginine rhamnosyltransferase</fullName>
    </alternativeName>
</protein>
<name>EARP_NEIME</name>
<reference key="1">
    <citation type="journal article" date="2016" name="PLoS ONE">
        <title>Neisseria meningitidis translation elongation factor P and its active-site arginine residue are essential for cell viability.</title>
        <authorList>
            <person name="Yanagisawa T."/>
            <person name="Takahashi H."/>
            <person name="Suzuki T."/>
            <person name="Masuda A."/>
            <person name="Dohmae N."/>
            <person name="Yokoyama S."/>
        </authorList>
    </citation>
    <scope>NUCLEOTIDE SEQUENCE [GENOMIC DNA]</scope>
    <scope>FUNCTION</scope>
    <scope>CATALYTIC ACTIVITY</scope>
    <scope>DISRUPTION PHENOTYPE</scope>
    <source>
        <strain evidence="6">NIID280</strain>
    </source>
</reference>
<keyword id="KW-0328">Glycosyltransferase</keyword>
<keyword id="KW-0808">Transferase</keyword>
<organism>
    <name type="scientific">Neisseria meningitidis</name>
    <dbReference type="NCBI Taxonomy" id="487"/>
    <lineage>
        <taxon>Bacteria</taxon>
        <taxon>Pseudomonadati</taxon>
        <taxon>Pseudomonadota</taxon>
        <taxon>Betaproteobacteria</taxon>
        <taxon>Neisseriales</taxon>
        <taxon>Neisseriaceae</taxon>
        <taxon>Neisseria</taxon>
    </lineage>
</organism>
<dbReference type="EC" id="2.4.1.-" evidence="5"/>
<dbReference type="EMBL" id="LC059993">
    <property type="protein sequence ID" value="BAU19337.1"/>
    <property type="molecule type" value="Genomic_DNA"/>
</dbReference>
<dbReference type="RefSeq" id="WP_002239014.1">
    <property type="nucleotide sequence ID" value="NZ_QSWN01000015.1"/>
</dbReference>
<dbReference type="SMR" id="A0A0T7AQA7"/>
<dbReference type="GO" id="GO:0106361">
    <property type="term" value="F:protein-arginine rhamnosyltransferase activity"/>
    <property type="evidence" value="ECO:0000314"/>
    <property type="project" value="UniProtKB"/>
</dbReference>
<dbReference type="InterPro" id="IPR016633">
    <property type="entry name" value="EarP"/>
</dbReference>
<dbReference type="NCBIfam" id="TIGR03837">
    <property type="entry name" value="efp_Arg_rhamno"/>
    <property type="match status" value="1"/>
</dbReference>
<dbReference type="Pfam" id="PF10093">
    <property type="entry name" value="EarP"/>
    <property type="match status" value="1"/>
</dbReference>
<dbReference type="PIRSF" id="PIRSF015557">
    <property type="entry name" value="UCP015557"/>
    <property type="match status" value="1"/>
</dbReference>
<comment type="function">
    <text evidence="2">Protein-arginine rhamnosyltransferase that catalyzes the transfer of a single rhamnose to elongation factor P (EF-P) on 'Lys-32', a modification required for EF-P-dependent rescue of polyproline stalled ribosomes.</text>
</comment>
<comment type="catalytic activity">
    <reaction evidence="5">
        <text>dTDP-beta-L-rhamnose + L-arginyl-[protein] = N(omega)-(alpha-L-rhamnosyl)-L-arginyl-[protein] + dTDP + H(+)</text>
        <dbReference type="Rhea" id="RHEA:66692"/>
        <dbReference type="Rhea" id="RHEA-COMP:10532"/>
        <dbReference type="Rhea" id="RHEA-COMP:17096"/>
        <dbReference type="ChEBI" id="CHEBI:15378"/>
        <dbReference type="ChEBI" id="CHEBI:29965"/>
        <dbReference type="ChEBI" id="CHEBI:57510"/>
        <dbReference type="ChEBI" id="CHEBI:58369"/>
        <dbReference type="ChEBI" id="CHEBI:167445"/>
    </reaction>
    <physiologicalReaction direction="left-to-right" evidence="5">
        <dbReference type="Rhea" id="RHEA:66693"/>
    </physiologicalReaction>
</comment>
<comment type="domain">
    <text evidence="1">Adopts a GT-B fold and acts as an inverting enzyme that converts the beta-configuration in the dTDP-beta-L-rhamnose donor to the alpha configuration in the N-linked (Rha) arginine product.</text>
</comment>
<comment type="disruption phenotype">
    <text evidence="2">Leads to much slower cell growth.</text>
</comment>
<comment type="similarity">
    <text evidence="4">Belongs to the glycosyltransferase 104 family.</text>
</comment>
<feature type="chain" id="PRO_0000452679" description="Protein-arginine rhamnosyltransferase">
    <location>
        <begin position="1"/>
        <end position="382"/>
    </location>
</feature>
<feature type="active site" description="Proton acceptor" evidence="1">
    <location>
        <position position="20"/>
    </location>
</feature>
<feature type="active site" evidence="1">
    <location>
        <position position="270"/>
    </location>
</feature>
<feature type="binding site" evidence="1">
    <location>
        <begin position="17"/>
        <end position="20"/>
    </location>
    <ligand>
        <name>dTDP-beta-L-rhamnose</name>
        <dbReference type="ChEBI" id="CHEBI:57510"/>
    </ligand>
</feature>
<feature type="binding site" evidence="1">
    <location>
        <position position="187"/>
    </location>
    <ligand>
        <name>dTDP-beta-L-rhamnose</name>
        <dbReference type="ChEBI" id="CHEBI:57510"/>
    </ligand>
</feature>
<feature type="binding site" evidence="1">
    <location>
        <position position="252"/>
    </location>
    <ligand>
        <name>dTDP-beta-L-rhamnose</name>
        <dbReference type="ChEBI" id="CHEBI:57510"/>
    </ligand>
</feature>
<feature type="binding site" evidence="1">
    <location>
        <begin position="268"/>
        <end position="272"/>
    </location>
    <ligand>
        <name>dTDP-beta-L-rhamnose</name>
        <dbReference type="ChEBI" id="CHEBI:57510"/>
    </ligand>
</feature>
<gene>
    <name evidence="3" type="primary">earP</name>
</gene>
<proteinExistence type="evidence at protein level"/>
<accession>A0A0T7AQA7</accession>
<evidence type="ECO:0000250" key="1">
    <source>
        <dbReference type="UniProtKB" id="Q9HZZ1"/>
    </source>
</evidence>
<evidence type="ECO:0000269" key="2">
    <source>
    </source>
</evidence>
<evidence type="ECO:0000303" key="3">
    <source>
    </source>
</evidence>
<evidence type="ECO:0000305" key="4"/>
<evidence type="ECO:0000305" key="5">
    <source>
    </source>
</evidence>
<evidence type="ECO:0000312" key="6">
    <source>
        <dbReference type="EMBL" id="BAU19337.1"/>
    </source>
</evidence>